<organism>
    <name type="scientific">Bordetella bronchiseptica (strain ATCC BAA-588 / NCTC 13252 / RB50)</name>
    <name type="common">Alcaligenes bronchisepticus</name>
    <dbReference type="NCBI Taxonomy" id="257310"/>
    <lineage>
        <taxon>Bacteria</taxon>
        <taxon>Pseudomonadati</taxon>
        <taxon>Pseudomonadota</taxon>
        <taxon>Betaproteobacteria</taxon>
        <taxon>Burkholderiales</taxon>
        <taxon>Alcaligenaceae</taxon>
        <taxon>Bordetella</taxon>
    </lineage>
</organism>
<keyword id="KW-0963">Cytoplasm</keyword>
<keyword id="KW-0489">Methyltransferase</keyword>
<keyword id="KW-0698">rRNA processing</keyword>
<keyword id="KW-0949">S-adenosyl-L-methionine</keyword>
<keyword id="KW-0808">Transferase</keyword>
<comment type="function">
    <text evidence="1">Specifically methylates the N7 position of guanine in position 527 of 16S rRNA.</text>
</comment>
<comment type="catalytic activity">
    <reaction evidence="1">
        <text>guanosine(527) in 16S rRNA + S-adenosyl-L-methionine = N(7)-methylguanosine(527) in 16S rRNA + S-adenosyl-L-homocysteine</text>
        <dbReference type="Rhea" id="RHEA:42732"/>
        <dbReference type="Rhea" id="RHEA-COMP:10209"/>
        <dbReference type="Rhea" id="RHEA-COMP:10210"/>
        <dbReference type="ChEBI" id="CHEBI:57856"/>
        <dbReference type="ChEBI" id="CHEBI:59789"/>
        <dbReference type="ChEBI" id="CHEBI:74269"/>
        <dbReference type="ChEBI" id="CHEBI:74480"/>
        <dbReference type="EC" id="2.1.1.170"/>
    </reaction>
</comment>
<comment type="subcellular location">
    <subcellularLocation>
        <location evidence="1">Cytoplasm</location>
    </subcellularLocation>
</comment>
<comment type="similarity">
    <text evidence="1">Belongs to the methyltransferase superfamily. RNA methyltransferase RsmG family.</text>
</comment>
<comment type="caution">
    <text evidence="2">Has a deletion of about 20 residues in between positions 79 and 80 when compared with orthologs.</text>
</comment>
<name>RSMG_BORBR</name>
<sequence length="210" mass="23251">MSAVPDIPGGPAQRLAQACDALRLPADAGQQQKLLRYIEQMQRWNRTYNLTAIRDPGQMLVQHLFDSLSVVAPLERGLPGVVLAIMRAHWDVTCVDAVEKKTAFVRQMAGALGLPNLQAAHTRIEQLEPAQCDVVISRAFASLQDFAKLAGRHVREGGTLVAMKGKVPDDEIQALQQHGHWTVERIEPLVVPALDAQRCLIWMRRSQGNI</sequence>
<feature type="chain" id="PRO_0000184222" description="Ribosomal RNA small subunit methyltransferase G">
    <location>
        <begin position="1"/>
        <end position="210"/>
    </location>
</feature>
<feature type="binding site" evidence="1">
    <location>
        <position position="78"/>
    </location>
    <ligand>
        <name>S-adenosyl-L-methionine</name>
        <dbReference type="ChEBI" id="CHEBI:59789"/>
    </ligand>
</feature>
<feature type="binding site" evidence="1">
    <location>
        <begin position="124"/>
        <end position="125"/>
    </location>
    <ligand>
        <name>S-adenosyl-L-methionine</name>
        <dbReference type="ChEBI" id="CHEBI:59789"/>
    </ligand>
</feature>
<feature type="binding site" evidence="1">
    <location>
        <position position="138"/>
    </location>
    <ligand>
        <name>S-adenosyl-L-methionine</name>
        <dbReference type="ChEBI" id="CHEBI:59789"/>
    </ligand>
</feature>
<gene>
    <name evidence="1" type="primary">rsmG</name>
    <name type="ordered locus">BB0002</name>
</gene>
<evidence type="ECO:0000255" key="1">
    <source>
        <dbReference type="HAMAP-Rule" id="MF_00074"/>
    </source>
</evidence>
<evidence type="ECO:0000305" key="2"/>
<proteinExistence type="inferred from homology"/>
<accession>Q7WRF0</accession>
<protein>
    <recommendedName>
        <fullName evidence="1">Ribosomal RNA small subunit methyltransferase G</fullName>
        <ecNumber evidence="1">2.1.1.170</ecNumber>
    </recommendedName>
    <alternativeName>
        <fullName evidence="1">16S rRNA 7-methylguanosine methyltransferase</fullName>
        <shortName evidence="1">16S rRNA m7G methyltransferase</shortName>
    </alternativeName>
</protein>
<dbReference type="EC" id="2.1.1.170" evidence="1"/>
<dbReference type="EMBL" id="BX640437">
    <property type="protein sequence ID" value="CAE30504.1"/>
    <property type="molecule type" value="Genomic_DNA"/>
</dbReference>
<dbReference type="RefSeq" id="WP_010925682.1">
    <property type="nucleotide sequence ID" value="NC_002927.3"/>
</dbReference>
<dbReference type="SMR" id="Q7WRF0"/>
<dbReference type="KEGG" id="bbr:BB0002"/>
<dbReference type="eggNOG" id="COG0357">
    <property type="taxonomic scope" value="Bacteria"/>
</dbReference>
<dbReference type="HOGENOM" id="CLU_065341_2_0_4"/>
<dbReference type="Proteomes" id="UP000001027">
    <property type="component" value="Chromosome"/>
</dbReference>
<dbReference type="GO" id="GO:0005829">
    <property type="term" value="C:cytosol"/>
    <property type="evidence" value="ECO:0007669"/>
    <property type="project" value="TreeGrafter"/>
</dbReference>
<dbReference type="GO" id="GO:0070043">
    <property type="term" value="F:rRNA (guanine-N7-)-methyltransferase activity"/>
    <property type="evidence" value="ECO:0007669"/>
    <property type="project" value="UniProtKB-UniRule"/>
</dbReference>
<dbReference type="Gene3D" id="3.40.50.150">
    <property type="entry name" value="Vaccinia Virus protein VP39"/>
    <property type="match status" value="1"/>
</dbReference>
<dbReference type="HAMAP" id="MF_00074">
    <property type="entry name" value="16SrRNA_methyltr_G"/>
    <property type="match status" value="1"/>
</dbReference>
<dbReference type="InterPro" id="IPR003682">
    <property type="entry name" value="rRNA_ssu_MeTfrase_G"/>
</dbReference>
<dbReference type="InterPro" id="IPR029063">
    <property type="entry name" value="SAM-dependent_MTases_sf"/>
</dbReference>
<dbReference type="NCBIfam" id="TIGR00138">
    <property type="entry name" value="rsmG_gidB"/>
    <property type="match status" value="1"/>
</dbReference>
<dbReference type="PANTHER" id="PTHR31760">
    <property type="entry name" value="S-ADENOSYL-L-METHIONINE-DEPENDENT METHYLTRANSFERASES SUPERFAMILY PROTEIN"/>
    <property type="match status" value="1"/>
</dbReference>
<dbReference type="PANTHER" id="PTHR31760:SF0">
    <property type="entry name" value="S-ADENOSYL-L-METHIONINE-DEPENDENT METHYLTRANSFERASES SUPERFAMILY PROTEIN"/>
    <property type="match status" value="1"/>
</dbReference>
<dbReference type="Pfam" id="PF02527">
    <property type="entry name" value="GidB"/>
    <property type="match status" value="1"/>
</dbReference>
<dbReference type="PIRSF" id="PIRSF003078">
    <property type="entry name" value="GidB"/>
    <property type="match status" value="1"/>
</dbReference>
<dbReference type="SUPFAM" id="SSF53335">
    <property type="entry name" value="S-adenosyl-L-methionine-dependent methyltransferases"/>
    <property type="match status" value="1"/>
</dbReference>
<reference key="1">
    <citation type="journal article" date="2003" name="Nat. Genet.">
        <title>Comparative analysis of the genome sequences of Bordetella pertussis, Bordetella parapertussis and Bordetella bronchiseptica.</title>
        <authorList>
            <person name="Parkhill J."/>
            <person name="Sebaihia M."/>
            <person name="Preston A."/>
            <person name="Murphy L.D."/>
            <person name="Thomson N.R."/>
            <person name="Harris D.E."/>
            <person name="Holden M.T.G."/>
            <person name="Churcher C.M."/>
            <person name="Bentley S.D."/>
            <person name="Mungall K.L."/>
            <person name="Cerdeno-Tarraga A.-M."/>
            <person name="Temple L."/>
            <person name="James K.D."/>
            <person name="Harris B."/>
            <person name="Quail M.A."/>
            <person name="Achtman M."/>
            <person name="Atkin R."/>
            <person name="Baker S."/>
            <person name="Basham D."/>
            <person name="Bason N."/>
            <person name="Cherevach I."/>
            <person name="Chillingworth T."/>
            <person name="Collins M."/>
            <person name="Cronin A."/>
            <person name="Davis P."/>
            <person name="Doggett J."/>
            <person name="Feltwell T."/>
            <person name="Goble A."/>
            <person name="Hamlin N."/>
            <person name="Hauser H."/>
            <person name="Holroyd S."/>
            <person name="Jagels K."/>
            <person name="Leather S."/>
            <person name="Moule S."/>
            <person name="Norberczak H."/>
            <person name="O'Neil S."/>
            <person name="Ormond D."/>
            <person name="Price C."/>
            <person name="Rabbinowitsch E."/>
            <person name="Rutter S."/>
            <person name="Sanders M."/>
            <person name="Saunders D."/>
            <person name="Seeger K."/>
            <person name="Sharp S."/>
            <person name="Simmonds M."/>
            <person name="Skelton J."/>
            <person name="Squares R."/>
            <person name="Squares S."/>
            <person name="Stevens K."/>
            <person name="Unwin L."/>
            <person name="Whitehead S."/>
            <person name="Barrell B.G."/>
            <person name="Maskell D.J."/>
        </authorList>
    </citation>
    <scope>NUCLEOTIDE SEQUENCE [LARGE SCALE GENOMIC DNA]</scope>
    <source>
        <strain>ATCC BAA-588 / NCTC 13252 / RB50</strain>
    </source>
</reference>